<reference key="1">
    <citation type="journal article" date="2007" name="PLoS ONE">
        <title>Analysis of the neurotoxin complex genes in Clostridium botulinum A1-A4 and B1 strains: BoNT/A3, /Ba4 and /B1 clusters are located within plasmids.</title>
        <authorList>
            <person name="Smith T.J."/>
            <person name="Hill K.K."/>
            <person name="Foley B.T."/>
            <person name="Detter J.C."/>
            <person name="Munk A.C."/>
            <person name="Bruce D.C."/>
            <person name="Doggett N.A."/>
            <person name="Smith L.A."/>
            <person name="Marks J.D."/>
            <person name="Xie G."/>
            <person name="Brettin T.S."/>
        </authorList>
    </citation>
    <scope>NUCLEOTIDE SEQUENCE [LARGE SCALE GENOMIC DNA]</scope>
    <source>
        <strain>Okra / Type B1</strain>
    </source>
</reference>
<evidence type="ECO:0000255" key="1">
    <source>
        <dbReference type="HAMAP-Rule" id="MF_00735"/>
    </source>
</evidence>
<accession>B1ILM1</accession>
<proteinExistence type="inferred from homology"/>
<name>PRMA_CLOBK</name>
<comment type="function">
    <text evidence="1">Methylates ribosomal protein L11.</text>
</comment>
<comment type="catalytic activity">
    <reaction evidence="1">
        <text>L-lysyl-[protein] + 3 S-adenosyl-L-methionine = N(6),N(6),N(6)-trimethyl-L-lysyl-[protein] + 3 S-adenosyl-L-homocysteine + 3 H(+)</text>
        <dbReference type="Rhea" id="RHEA:54192"/>
        <dbReference type="Rhea" id="RHEA-COMP:9752"/>
        <dbReference type="Rhea" id="RHEA-COMP:13826"/>
        <dbReference type="ChEBI" id="CHEBI:15378"/>
        <dbReference type="ChEBI" id="CHEBI:29969"/>
        <dbReference type="ChEBI" id="CHEBI:57856"/>
        <dbReference type="ChEBI" id="CHEBI:59789"/>
        <dbReference type="ChEBI" id="CHEBI:61961"/>
    </reaction>
</comment>
<comment type="subcellular location">
    <subcellularLocation>
        <location evidence="1">Cytoplasm</location>
    </subcellularLocation>
</comment>
<comment type="similarity">
    <text evidence="1">Belongs to the methyltransferase superfamily. PrmA family.</text>
</comment>
<gene>
    <name evidence="1" type="primary">prmA</name>
    <name type="ordered locus">CLD_1588</name>
</gene>
<protein>
    <recommendedName>
        <fullName evidence="1">Ribosomal protein L11 methyltransferase</fullName>
        <shortName evidence="1">L11 Mtase</shortName>
        <ecNumber evidence="1">2.1.1.-</ecNumber>
    </recommendedName>
</protein>
<sequence length="312" mass="35338">MDKEWLEVCIYTSSEALEAISGILYNTGVKGVSIEDPKDIEFKRKHPGDWDYFDETLLKVKDTAIVKGYYKEDDKFNEYLDYIKKSVSNLDQFGIDKGEGLVEVHEVNEEDWENNWKKYYKPTKVSNKIVIKPIWENYDKKQEEIIVELDPGMAFGTGTHETTRMCINALEKYIKEDRTVFDIGCGSGILSIAAAKLGAKHVIGVDLDPVAVKSSKENIKYNNLDNIEILEGNLMEVVEGRANIVVANIIADVIIFLTEGVKAFIEKGGYFIASGIINSRKEDVIKKLEETGFIIEEVREEGEWACIVSKIN</sequence>
<feature type="chain" id="PRO_1000192606" description="Ribosomal protein L11 methyltransferase">
    <location>
        <begin position="1"/>
        <end position="312"/>
    </location>
</feature>
<feature type="binding site" evidence="1">
    <location>
        <position position="163"/>
    </location>
    <ligand>
        <name>S-adenosyl-L-methionine</name>
        <dbReference type="ChEBI" id="CHEBI:59789"/>
    </ligand>
</feature>
<feature type="binding site" evidence="1">
    <location>
        <position position="184"/>
    </location>
    <ligand>
        <name>S-adenosyl-L-methionine</name>
        <dbReference type="ChEBI" id="CHEBI:59789"/>
    </ligand>
</feature>
<feature type="binding site" evidence="1">
    <location>
        <position position="206"/>
    </location>
    <ligand>
        <name>S-adenosyl-L-methionine</name>
        <dbReference type="ChEBI" id="CHEBI:59789"/>
    </ligand>
</feature>
<feature type="binding site" evidence="1">
    <location>
        <position position="248"/>
    </location>
    <ligand>
        <name>S-adenosyl-L-methionine</name>
        <dbReference type="ChEBI" id="CHEBI:59789"/>
    </ligand>
</feature>
<organism>
    <name type="scientific">Clostridium botulinum (strain Okra / Type B1)</name>
    <dbReference type="NCBI Taxonomy" id="498213"/>
    <lineage>
        <taxon>Bacteria</taxon>
        <taxon>Bacillati</taxon>
        <taxon>Bacillota</taxon>
        <taxon>Clostridia</taxon>
        <taxon>Eubacteriales</taxon>
        <taxon>Clostridiaceae</taxon>
        <taxon>Clostridium</taxon>
    </lineage>
</organism>
<dbReference type="EC" id="2.1.1.-" evidence="1"/>
<dbReference type="EMBL" id="CP000939">
    <property type="protein sequence ID" value="ACA43577.1"/>
    <property type="molecule type" value="Genomic_DNA"/>
</dbReference>
<dbReference type="RefSeq" id="WP_004451907.1">
    <property type="nucleotide sequence ID" value="NC_010516.1"/>
</dbReference>
<dbReference type="SMR" id="B1ILM1"/>
<dbReference type="KEGG" id="cbb:CLD_1588"/>
<dbReference type="HOGENOM" id="CLU_049382_0_1_9"/>
<dbReference type="Proteomes" id="UP000008541">
    <property type="component" value="Chromosome"/>
</dbReference>
<dbReference type="GO" id="GO:0005737">
    <property type="term" value="C:cytoplasm"/>
    <property type="evidence" value="ECO:0007669"/>
    <property type="project" value="UniProtKB-SubCell"/>
</dbReference>
<dbReference type="GO" id="GO:0016279">
    <property type="term" value="F:protein-lysine N-methyltransferase activity"/>
    <property type="evidence" value="ECO:0007669"/>
    <property type="project" value="RHEA"/>
</dbReference>
<dbReference type="GO" id="GO:0032259">
    <property type="term" value="P:methylation"/>
    <property type="evidence" value="ECO:0007669"/>
    <property type="project" value="UniProtKB-KW"/>
</dbReference>
<dbReference type="CDD" id="cd02440">
    <property type="entry name" value="AdoMet_MTases"/>
    <property type="match status" value="1"/>
</dbReference>
<dbReference type="Gene3D" id="3.40.50.150">
    <property type="entry name" value="Vaccinia Virus protein VP39"/>
    <property type="match status" value="1"/>
</dbReference>
<dbReference type="HAMAP" id="MF_00735">
    <property type="entry name" value="Methyltr_PrmA"/>
    <property type="match status" value="1"/>
</dbReference>
<dbReference type="InterPro" id="IPR050078">
    <property type="entry name" value="Ribosomal_L11_MeTrfase_PrmA"/>
</dbReference>
<dbReference type="InterPro" id="IPR004498">
    <property type="entry name" value="Ribosomal_PrmA_MeTrfase"/>
</dbReference>
<dbReference type="InterPro" id="IPR029063">
    <property type="entry name" value="SAM-dependent_MTases_sf"/>
</dbReference>
<dbReference type="NCBIfam" id="TIGR00406">
    <property type="entry name" value="prmA"/>
    <property type="match status" value="1"/>
</dbReference>
<dbReference type="PANTHER" id="PTHR43648">
    <property type="entry name" value="ELECTRON TRANSFER FLAVOPROTEIN BETA SUBUNIT LYSINE METHYLTRANSFERASE"/>
    <property type="match status" value="1"/>
</dbReference>
<dbReference type="PANTHER" id="PTHR43648:SF1">
    <property type="entry name" value="ELECTRON TRANSFER FLAVOPROTEIN BETA SUBUNIT LYSINE METHYLTRANSFERASE"/>
    <property type="match status" value="1"/>
</dbReference>
<dbReference type="Pfam" id="PF06325">
    <property type="entry name" value="PrmA"/>
    <property type="match status" value="1"/>
</dbReference>
<dbReference type="PIRSF" id="PIRSF000401">
    <property type="entry name" value="RPL11_MTase"/>
    <property type="match status" value="1"/>
</dbReference>
<dbReference type="SUPFAM" id="SSF53335">
    <property type="entry name" value="S-adenosyl-L-methionine-dependent methyltransferases"/>
    <property type="match status" value="1"/>
</dbReference>
<keyword id="KW-0963">Cytoplasm</keyword>
<keyword id="KW-0489">Methyltransferase</keyword>
<keyword id="KW-0949">S-adenosyl-L-methionine</keyword>
<keyword id="KW-0808">Transferase</keyword>